<dbReference type="EC" id="2.7.8.26"/>
<dbReference type="EMBL" id="AE000782">
    <property type="protein sequence ID" value="AAB88933.1"/>
    <property type="molecule type" value="Genomic_DNA"/>
</dbReference>
<dbReference type="PIR" id="C69540">
    <property type="entry name" value="C69540"/>
</dbReference>
<dbReference type="STRING" id="224325.AF_2323"/>
<dbReference type="PaxDb" id="224325-AF_2323"/>
<dbReference type="EnsemblBacteria" id="AAB88933">
    <property type="protein sequence ID" value="AAB88933"/>
    <property type="gene ID" value="AF_2323"/>
</dbReference>
<dbReference type="KEGG" id="afu:AF_2323"/>
<dbReference type="eggNOG" id="arCOG04338">
    <property type="taxonomic scope" value="Archaea"/>
</dbReference>
<dbReference type="HOGENOM" id="CLU_057426_2_0_2"/>
<dbReference type="OrthoDB" id="11748at2157"/>
<dbReference type="PhylomeDB" id="O27961"/>
<dbReference type="UniPathway" id="UPA00148">
    <property type="reaction ID" value="UER00238"/>
</dbReference>
<dbReference type="Proteomes" id="UP000002199">
    <property type="component" value="Chromosome"/>
</dbReference>
<dbReference type="GO" id="GO:0005886">
    <property type="term" value="C:plasma membrane"/>
    <property type="evidence" value="ECO:0007669"/>
    <property type="project" value="UniProtKB-SubCell"/>
</dbReference>
<dbReference type="GO" id="GO:0051073">
    <property type="term" value="F:adenosylcobinamide-GDP ribazoletransferase activity"/>
    <property type="evidence" value="ECO:0007669"/>
    <property type="project" value="UniProtKB-UniRule"/>
</dbReference>
<dbReference type="GO" id="GO:0008818">
    <property type="term" value="F:cobalamin 5'-phosphate synthase activity"/>
    <property type="evidence" value="ECO:0007669"/>
    <property type="project" value="UniProtKB-UniRule"/>
</dbReference>
<dbReference type="GO" id="GO:0009236">
    <property type="term" value="P:cobalamin biosynthetic process"/>
    <property type="evidence" value="ECO:0007669"/>
    <property type="project" value="UniProtKB-UniRule"/>
</dbReference>
<dbReference type="HAMAP" id="MF_00719">
    <property type="entry name" value="CobS"/>
    <property type="match status" value="1"/>
</dbReference>
<dbReference type="InterPro" id="IPR003805">
    <property type="entry name" value="CobS"/>
</dbReference>
<dbReference type="NCBIfam" id="TIGR00317">
    <property type="entry name" value="cobS"/>
    <property type="match status" value="1"/>
</dbReference>
<dbReference type="PANTHER" id="PTHR34148">
    <property type="entry name" value="ADENOSYLCOBINAMIDE-GDP RIBAZOLETRANSFERASE"/>
    <property type="match status" value="1"/>
</dbReference>
<dbReference type="PANTHER" id="PTHR34148:SF1">
    <property type="entry name" value="ADENOSYLCOBINAMIDE-GDP RIBAZOLETRANSFERASE"/>
    <property type="match status" value="1"/>
</dbReference>
<dbReference type="Pfam" id="PF02654">
    <property type="entry name" value="CobS"/>
    <property type="match status" value="1"/>
</dbReference>
<gene>
    <name type="primary">cobS2</name>
    <name type="ordered locus">AF_2323</name>
</gene>
<feature type="chain" id="PRO_0000146907" description="Adenosylcobinamide-GDP ribazoletransferase">
    <location>
        <begin position="1"/>
        <end position="231"/>
    </location>
</feature>
<feature type="transmembrane region" description="Helical" evidence="2">
    <location>
        <begin position="28"/>
        <end position="48"/>
    </location>
</feature>
<feature type="transmembrane region" description="Helical" evidence="2">
    <location>
        <begin position="97"/>
        <end position="117"/>
    </location>
</feature>
<feature type="transmembrane region" description="Helical" evidence="2">
    <location>
        <begin position="121"/>
        <end position="141"/>
    </location>
</feature>
<feature type="transmembrane region" description="Helical" evidence="2">
    <location>
        <begin position="162"/>
        <end position="182"/>
    </location>
</feature>
<feature type="transmembrane region" description="Helical" evidence="2">
    <location>
        <begin position="209"/>
        <end position="229"/>
    </location>
</feature>
<proteinExistence type="inferred from homology"/>
<name>COBS2_ARCFU</name>
<keyword id="KW-1003">Cell membrane</keyword>
<keyword id="KW-0169">Cobalamin biosynthesis</keyword>
<keyword id="KW-0460">Magnesium</keyword>
<keyword id="KW-0472">Membrane</keyword>
<keyword id="KW-1185">Reference proteome</keyword>
<keyword id="KW-0808">Transferase</keyword>
<keyword id="KW-0812">Transmembrane</keyword>
<keyword id="KW-1133">Transmembrane helix</keyword>
<organism>
    <name type="scientific">Archaeoglobus fulgidus (strain ATCC 49558 / DSM 4304 / JCM 9628 / NBRC 100126 / VC-16)</name>
    <dbReference type="NCBI Taxonomy" id="224325"/>
    <lineage>
        <taxon>Archaea</taxon>
        <taxon>Methanobacteriati</taxon>
        <taxon>Methanobacteriota</taxon>
        <taxon>Archaeoglobi</taxon>
        <taxon>Archaeoglobales</taxon>
        <taxon>Archaeoglobaceae</taxon>
        <taxon>Archaeoglobus</taxon>
    </lineage>
</organism>
<sequence>MIKAIRSAISFLTTLPLGGDVEELRKNLWLFPYAAILIALIVSVPHFIRNFVDIRFLALVLYLGAEGINHVDGLADFGDALFAPKNRKREAIKDLNTGAGGVAVVVVYFLLLYTLLYRSDFWEIALSQVLAKYSMLLLMLLSRPSWDGMGSYFMEKISSKDVFIGAVPVVLLCYKVGIESLAALASGFAVVLLLKAYSEKHFGGVNGDVIGSANCLTFAASLSALTIAGQL</sequence>
<protein>
    <recommendedName>
        <fullName>Adenosylcobinamide-GDP ribazoletransferase</fullName>
        <ecNumber>2.7.8.26</ecNumber>
    </recommendedName>
    <alternativeName>
        <fullName>Cobalamin synthase</fullName>
    </alternativeName>
    <alternativeName>
        <fullName>Cobalamin-5'-phosphate synthase</fullName>
    </alternativeName>
</protein>
<reference key="1">
    <citation type="journal article" date="1997" name="Nature">
        <title>The complete genome sequence of the hyperthermophilic, sulphate-reducing archaeon Archaeoglobus fulgidus.</title>
        <authorList>
            <person name="Klenk H.-P."/>
            <person name="Clayton R.A."/>
            <person name="Tomb J.-F."/>
            <person name="White O."/>
            <person name="Nelson K.E."/>
            <person name="Ketchum K.A."/>
            <person name="Dodson R.J."/>
            <person name="Gwinn M.L."/>
            <person name="Hickey E.K."/>
            <person name="Peterson J.D."/>
            <person name="Richardson D.L."/>
            <person name="Kerlavage A.R."/>
            <person name="Graham D.E."/>
            <person name="Kyrpides N.C."/>
            <person name="Fleischmann R.D."/>
            <person name="Quackenbush J."/>
            <person name="Lee N.H."/>
            <person name="Sutton G.G."/>
            <person name="Gill S.R."/>
            <person name="Kirkness E.F."/>
            <person name="Dougherty B.A."/>
            <person name="McKenney K."/>
            <person name="Adams M.D."/>
            <person name="Loftus B.J."/>
            <person name="Peterson S.N."/>
            <person name="Reich C.I."/>
            <person name="McNeil L.K."/>
            <person name="Badger J.H."/>
            <person name="Glodek A."/>
            <person name="Zhou L."/>
            <person name="Overbeek R."/>
            <person name="Gocayne J.D."/>
            <person name="Weidman J.F."/>
            <person name="McDonald L.A."/>
            <person name="Utterback T.R."/>
            <person name="Cotton M.D."/>
            <person name="Spriggs T."/>
            <person name="Artiach P."/>
            <person name="Kaine B.P."/>
            <person name="Sykes S.M."/>
            <person name="Sadow P.W."/>
            <person name="D'Andrea K.P."/>
            <person name="Bowman C."/>
            <person name="Fujii C."/>
            <person name="Garland S.A."/>
            <person name="Mason T.M."/>
            <person name="Olsen G.J."/>
            <person name="Fraser C.M."/>
            <person name="Smith H.O."/>
            <person name="Woese C.R."/>
            <person name="Venter J.C."/>
        </authorList>
    </citation>
    <scope>NUCLEOTIDE SEQUENCE [LARGE SCALE GENOMIC DNA]</scope>
    <source>
        <strain>ATCC 49558 / DSM 4304 / JCM 9628 / NBRC 100126 / VC-16</strain>
    </source>
</reference>
<accession>O27961</accession>
<evidence type="ECO:0000250" key="1"/>
<evidence type="ECO:0000255" key="2"/>
<evidence type="ECO:0000305" key="3"/>
<comment type="function">
    <text evidence="1">Joins adenosylcobinamide-GDP and alpha-ribazole to generate adenosylcobalamin (Ado-cobalamin). Also synthesizes adenosylcobalamin 5'-phosphate from adenosylcobinamide-GDP and alpha-ribazole 5'-phosphate (By similarity).</text>
</comment>
<comment type="catalytic activity">
    <reaction>
        <text>alpha-ribazole + adenosylcob(III)inamide-GDP = adenosylcob(III)alamin + GMP + H(+)</text>
        <dbReference type="Rhea" id="RHEA:16049"/>
        <dbReference type="ChEBI" id="CHEBI:10329"/>
        <dbReference type="ChEBI" id="CHEBI:15378"/>
        <dbReference type="ChEBI" id="CHEBI:18408"/>
        <dbReference type="ChEBI" id="CHEBI:58115"/>
        <dbReference type="ChEBI" id="CHEBI:60487"/>
        <dbReference type="EC" id="2.7.8.26"/>
    </reaction>
</comment>
<comment type="catalytic activity">
    <reaction>
        <text>alpha-ribazole 5'-phosphate + adenosylcob(III)inamide-GDP = adenosylcob(III)alamin 5'-phosphate + GMP + H(+)</text>
        <dbReference type="Rhea" id="RHEA:23560"/>
        <dbReference type="ChEBI" id="CHEBI:15378"/>
        <dbReference type="ChEBI" id="CHEBI:57918"/>
        <dbReference type="ChEBI" id="CHEBI:58115"/>
        <dbReference type="ChEBI" id="CHEBI:60487"/>
        <dbReference type="ChEBI" id="CHEBI:60493"/>
        <dbReference type="EC" id="2.7.8.26"/>
    </reaction>
</comment>
<comment type="cofactor">
    <cofactor evidence="1">
        <name>Mg(2+)</name>
        <dbReference type="ChEBI" id="CHEBI:18420"/>
    </cofactor>
</comment>
<comment type="pathway">
    <text>Cofactor biosynthesis; adenosylcobalamin biosynthesis; adenosylcobalamin from cob(II)yrinate a,c-diamide: step 7/7.</text>
</comment>
<comment type="subcellular location">
    <subcellularLocation>
        <location evidence="1">Cell membrane</location>
        <topology evidence="1">Multi-pass membrane protein</topology>
    </subcellularLocation>
</comment>
<comment type="similarity">
    <text evidence="3">Belongs to the CobS family.</text>
</comment>